<comment type="function">
    <text evidence="1">May activate transcription by interacting directly with the X-box.</text>
</comment>
<comment type="subcellular location">
    <subcellularLocation>
        <location evidence="2">Nucleus</location>
    </subcellularLocation>
</comment>
<comment type="similarity">
    <text evidence="2">Belongs to the RFX family.</text>
</comment>
<gene>
    <name type="primary">rfx4</name>
    <name type="ORF">si:dkey-103i16.7</name>
</gene>
<feature type="chain" id="PRO_0000314239" description="Transcription factor RFX4">
    <location>
        <begin position="1"/>
        <end position="735"/>
    </location>
</feature>
<feature type="DNA-binding region">
    <location>
        <begin position="44"/>
        <end position="126"/>
    </location>
</feature>
<feature type="DNA-binding region" description="RFX-type winged-helix" evidence="2">
    <location>
        <begin position="61"/>
        <end position="136"/>
    </location>
</feature>
<feature type="region of interest" description="Disordered" evidence="3">
    <location>
        <begin position="25"/>
        <end position="59"/>
    </location>
</feature>
<feature type="region of interest" description="Necessary for dimerization">
    <location>
        <begin position="315"/>
        <end position="487"/>
    </location>
</feature>
<feature type="sequence conflict" description="In Ref. 1; AAM52486." evidence="4" ref="1">
    <original>H</original>
    <variation>L</variation>
    <location>
        <position position="2"/>
    </location>
</feature>
<feature type="sequence conflict" description="In Ref. 2; BAF75865." evidence="4" ref="2">
    <original>S</original>
    <variation>P</variation>
    <location>
        <position position="40"/>
    </location>
</feature>
<feature type="sequence conflict" description="In Ref. 1; AAM52486." evidence="4" ref="1">
    <original>S</original>
    <variation>I</variation>
    <location>
        <position position="80"/>
    </location>
</feature>
<feature type="sequence conflict" description="In Ref. 2; BAF75865." evidence="4" ref="2">
    <original>D</original>
    <variation>G</variation>
    <location>
        <position position="214"/>
    </location>
</feature>
<feature type="sequence conflict" description="In Ref. 2; BAF75865." evidence="4" ref="2">
    <original>S</original>
    <variation>G</variation>
    <location>
        <position position="446"/>
    </location>
</feature>
<feature type="sequence conflict" description="In Ref. 1; AAM52486." evidence="4" ref="1">
    <original>A</original>
    <variation>G</variation>
    <location>
        <position position="510"/>
    </location>
</feature>
<sequence length="735" mass="82819">MHCGLLEEPDMDSTESWIERCLNESESKRFSSHSSIGNISNDENEEKENNRASKPHSTPATLQWLEENYEIAEGVCIPRSALYMHYLDFCEKLDSQPVNAASFGKIIRQQFPQLTTRRLGTRGQSKYHYYGIAVKESSQYYDVMYSKKGAAWVNETGKKEVTKQTVAYSPRSKLGTLLPDFPNVKDLNLPASLPEEKVSTFIMMYRTHCQRILDTVIRANFDEVQSFLLHFWQGMPPHMLPVLGSSTVVNIVGVCDSILYKAISGVLMPTVLQALPDSLTQVIRKFAKQLDEWLKVALHDLPENLRNIKFELSRRFSQILKRQTSLNHLCQASRTVIHSADITFQMLEDWRNVDLNSITKQTLYTMEDSREDQRRLIIQLYQEFDRLLEDQSPIEAYIEWLDSMVERCVVRVAGKRPGSLKRVAQQFLLMWSCFGTRVIRDMTLHSAPSFGSFHLIHLMFDDYVLYLLESLHCQERANELMRAMKGEGAPADTGEELMLMSSTPTSTSPAPYSPAKSVHSVGVPAVGSPNSAQSPEYTSISATTGAVQSYTWSLTYTVTTSGGSPTEPGSQLSCMRGGPALHGSSSAHRMPVYPHRDEHGYTGSYNYSSYANQHHHAIQSQYSSLTHEAGLPTPLHYSSYHRTSAQYPLNSQMSRMESCLMSGSPLLHSSPVTPRWPDVPSANSCYSSPTVHASRYSTGDMYSPLAPRRNSEYEHAQHFPGFAYINGEATTGWAK</sequence>
<reference key="1">
    <citation type="journal article" date="2003" name="Development">
        <title>Graded phenotypic response to partial and complete deficiency of a brain-specific transcript variant of the winged helix transcription factor RFX4.</title>
        <authorList>
            <person name="Blackshear P.J."/>
            <person name="Graves J.P."/>
            <person name="Stumpo D.J."/>
            <person name="Cobos I."/>
            <person name="Rubenstein J.L.R."/>
            <person name="Zeldin D.C."/>
        </authorList>
    </citation>
    <scope>NUCLEOTIDE SEQUENCE [MRNA]</scope>
</reference>
<reference key="2">
    <citation type="journal article" date="2008" name="Development">
        <title>Insertional mutagenesis by the Tol2 transposon-mediated enhancer trap approach generated mutations in two developmental genes: tcf7 and synembryn-like.</title>
        <authorList>
            <person name="Nagayoshi S."/>
            <person name="Hayashi E."/>
            <person name="Abe G."/>
            <person name="Osato N."/>
            <person name="Asakawa K."/>
            <person name="Urasaki A."/>
            <person name="Horikawa K."/>
            <person name="Ikeo K."/>
            <person name="Takeda H."/>
            <person name="Kawakami K."/>
        </authorList>
    </citation>
    <scope>NUCLEOTIDE SEQUENCE [MRNA]</scope>
</reference>
<reference key="3">
    <citation type="journal article" date="2013" name="Nature">
        <title>The zebrafish reference genome sequence and its relationship to the human genome.</title>
        <authorList>
            <person name="Howe K."/>
            <person name="Clark M.D."/>
            <person name="Torroja C.F."/>
            <person name="Torrance J."/>
            <person name="Berthelot C."/>
            <person name="Muffato M."/>
            <person name="Collins J.E."/>
            <person name="Humphray S."/>
            <person name="McLaren K."/>
            <person name="Matthews L."/>
            <person name="McLaren S."/>
            <person name="Sealy I."/>
            <person name="Caccamo M."/>
            <person name="Churcher C."/>
            <person name="Scott C."/>
            <person name="Barrett J.C."/>
            <person name="Koch R."/>
            <person name="Rauch G.J."/>
            <person name="White S."/>
            <person name="Chow W."/>
            <person name="Kilian B."/>
            <person name="Quintais L.T."/>
            <person name="Guerra-Assuncao J.A."/>
            <person name="Zhou Y."/>
            <person name="Gu Y."/>
            <person name="Yen J."/>
            <person name="Vogel J.H."/>
            <person name="Eyre T."/>
            <person name="Redmond S."/>
            <person name="Banerjee R."/>
            <person name="Chi J."/>
            <person name="Fu B."/>
            <person name="Langley E."/>
            <person name="Maguire S.F."/>
            <person name="Laird G.K."/>
            <person name="Lloyd D."/>
            <person name="Kenyon E."/>
            <person name="Donaldson S."/>
            <person name="Sehra H."/>
            <person name="Almeida-King J."/>
            <person name="Loveland J."/>
            <person name="Trevanion S."/>
            <person name="Jones M."/>
            <person name="Quail M."/>
            <person name="Willey D."/>
            <person name="Hunt A."/>
            <person name="Burton J."/>
            <person name="Sims S."/>
            <person name="McLay K."/>
            <person name="Plumb B."/>
            <person name="Davis J."/>
            <person name="Clee C."/>
            <person name="Oliver K."/>
            <person name="Clark R."/>
            <person name="Riddle C."/>
            <person name="Elliot D."/>
            <person name="Threadgold G."/>
            <person name="Harden G."/>
            <person name="Ware D."/>
            <person name="Begum S."/>
            <person name="Mortimore B."/>
            <person name="Kerry G."/>
            <person name="Heath P."/>
            <person name="Phillimore B."/>
            <person name="Tracey A."/>
            <person name="Corby N."/>
            <person name="Dunn M."/>
            <person name="Johnson C."/>
            <person name="Wood J."/>
            <person name="Clark S."/>
            <person name="Pelan S."/>
            <person name="Griffiths G."/>
            <person name="Smith M."/>
            <person name="Glithero R."/>
            <person name="Howden P."/>
            <person name="Barker N."/>
            <person name="Lloyd C."/>
            <person name="Stevens C."/>
            <person name="Harley J."/>
            <person name="Holt K."/>
            <person name="Panagiotidis G."/>
            <person name="Lovell J."/>
            <person name="Beasley H."/>
            <person name="Henderson C."/>
            <person name="Gordon D."/>
            <person name="Auger K."/>
            <person name="Wright D."/>
            <person name="Collins J."/>
            <person name="Raisen C."/>
            <person name="Dyer L."/>
            <person name="Leung K."/>
            <person name="Robertson L."/>
            <person name="Ambridge K."/>
            <person name="Leongamornlert D."/>
            <person name="McGuire S."/>
            <person name="Gilderthorp R."/>
            <person name="Griffiths C."/>
            <person name="Manthravadi D."/>
            <person name="Nichol S."/>
            <person name="Barker G."/>
            <person name="Whitehead S."/>
            <person name="Kay M."/>
            <person name="Brown J."/>
            <person name="Murnane C."/>
            <person name="Gray E."/>
            <person name="Humphries M."/>
            <person name="Sycamore N."/>
            <person name="Barker D."/>
            <person name="Saunders D."/>
            <person name="Wallis J."/>
            <person name="Babbage A."/>
            <person name="Hammond S."/>
            <person name="Mashreghi-Mohammadi M."/>
            <person name="Barr L."/>
            <person name="Martin S."/>
            <person name="Wray P."/>
            <person name="Ellington A."/>
            <person name="Matthews N."/>
            <person name="Ellwood M."/>
            <person name="Woodmansey R."/>
            <person name="Clark G."/>
            <person name="Cooper J."/>
            <person name="Tromans A."/>
            <person name="Grafham D."/>
            <person name="Skuce C."/>
            <person name="Pandian R."/>
            <person name="Andrews R."/>
            <person name="Harrison E."/>
            <person name="Kimberley A."/>
            <person name="Garnett J."/>
            <person name="Fosker N."/>
            <person name="Hall R."/>
            <person name="Garner P."/>
            <person name="Kelly D."/>
            <person name="Bird C."/>
            <person name="Palmer S."/>
            <person name="Gehring I."/>
            <person name="Berger A."/>
            <person name="Dooley C.M."/>
            <person name="Ersan-Urun Z."/>
            <person name="Eser C."/>
            <person name="Geiger H."/>
            <person name="Geisler M."/>
            <person name="Karotki L."/>
            <person name="Kirn A."/>
            <person name="Konantz J."/>
            <person name="Konantz M."/>
            <person name="Oberlander M."/>
            <person name="Rudolph-Geiger S."/>
            <person name="Teucke M."/>
            <person name="Lanz C."/>
            <person name="Raddatz G."/>
            <person name="Osoegawa K."/>
            <person name="Zhu B."/>
            <person name="Rapp A."/>
            <person name="Widaa S."/>
            <person name="Langford C."/>
            <person name="Yang F."/>
            <person name="Schuster S.C."/>
            <person name="Carter N.P."/>
            <person name="Harrow J."/>
            <person name="Ning Z."/>
            <person name="Herrero J."/>
            <person name="Searle S.M."/>
            <person name="Enright A."/>
            <person name="Geisler R."/>
            <person name="Plasterk R.H."/>
            <person name="Lee C."/>
            <person name="Westerfield M."/>
            <person name="de Jong P.J."/>
            <person name="Zon L.I."/>
            <person name="Postlethwait J.H."/>
            <person name="Nusslein-Volhard C."/>
            <person name="Hubbard T.J."/>
            <person name="Roest Crollius H."/>
            <person name="Rogers J."/>
            <person name="Stemple D.L."/>
        </authorList>
    </citation>
    <scope>NUCLEOTIDE SEQUENCE [LARGE SCALE GENOMIC DNA]</scope>
    <source>
        <strain>Tuebingen</strain>
    </source>
</reference>
<proteinExistence type="evidence at transcript level"/>
<protein>
    <recommendedName>
        <fullName>Transcription factor RFX4</fullName>
    </recommendedName>
    <alternativeName>
        <fullName>Regulatory factor X 4</fullName>
    </alternativeName>
</protein>
<name>RFX4_DANRE</name>
<accession>A2BGA0</accession>
<accession>A7M781</accession>
<accession>Q6YM51</accession>
<keyword id="KW-0010">Activator</keyword>
<keyword id="KW-0238">DNA-binding</keyword>
<keyword id="KW-0539">Nucleus</keyword>
<keyword id="KW-1185">Reference proteome</keyword>
<keyword id="KW-0804">Transcription</keyword>
<keyword id="KW-0805">Transcription regulation</keyword>
<organism>
    <name type="scientific">Danio rerio</name>
    <name type="common">Zebrafish</name>
    <name type="synonym">Brachydanio rerio</name>
    <dbReference type="NCBI Taxonomy" id="7955"/>
    <lineage>
        <taxon>Eukaryota</taxon>
        <taxon>Metazoa</taxon>
        <taxon>Chordata</taxon>
        <taxon>Craniata</taxon>
        <taxon>Vertebrata</taxon>
        <taxon>Euteleostomi</taxon>
        <taxon>Actinopterygii</taxon>
        <taxon>Neopterygii</taxon>
        <taxon>Teleostei</taxon>
        <taxon>Ostariophysi</taxon>
        <taxon>Cypriniformes</taxon>
        <taxon>Danionidae</taxon>
        <taxon>Danioninae</taxon>
        <taxon>Danio</taxon>
    </lineage>
</organism>
<dbReference type="EMBL" id="AY102011">
    <property type="protein sequence ID" value="AAM52486.1"/>
    <property type="molecule type" value="mRNA"/>
</dbReference>
<dbReference type="EMBL" id="AB355649">
    <property type="protein sequence ID" value="BAF75865.1"/>
    <property type="molecule type" value="mRNA"/>
</dbReference>
<dbReference type="EMBL" id="BX465207">
    <property type="protein sequence ID" value="CAM12990.1"/>
    <property type="molecule type" value="Genomic_DNA"/>
</dbReference>
<dbReference type="RefSeq" id="NP_991275.2">
    <property type="nucleotide sequence ID" value="NM_205712.2"/>
</dbReference>
<dbReference type="SMR" id="A2BGA0"/>
<dbReference type="FunCoup" id="A2BGA0">
    <property type="interactions" value="143"/>
</dbReference>
<dbReference type="STRING" id="7955.ENSDARP00000032295"/>
<dbReference type="PaxDb" id="7955-ENSDARP00000032295"/>
<dbReference type="PeptideAtlas" id="A2BGA0"/>
<dbReference type="Ensembl" id="ENSDART00000031752">
    <property type="protein sequence ID" value="ENSDARP00000032295"/>
    <property type="gene ID" value="ENSDARG00000026395"/>
</dbReference>
<dbReference type="GeneID" id="403016"/>
<dbReference type="KEGG" id="dre:403016"/>
<dbReference type="AGR" id="ZFIN:ZDB-GENE-040909-2"/>
<dbReference type="CTD" id="5992"/>
<dbReference type="ZFIN" id="ZDB-GENE-040909-2">
    <property type="gene designation" value="rfx4"/>
</dbReference>
<dbReference type="eggNOG" id="KOG3712">
    <property type="taxonomic scope" value="Eukaryota"/>
</dbReference>
<dbReference type="HOGENOM" id="CLU_377067_0_0_1"/>
<dbReference type="InParanoid" id="A2BGA0"/>
<dbReference type="OMA" id="YAHREEH"/>
<dbReference type="OrthoDB" id="10056949at2759"/>
<dbReference type="PhylomeDB" id="A2BGA0"/>
<dbReference type="TreeFam" id="TF321340"/>
<dbReference type="PRO" id="PR:A2BGA0"/>
<dbReference type="Proteomes" id="UP000000437">
    <property type="component" value="Alternate scaffold 18"/>
</dbReference>
<dbReference type="Proteomes" id="UP000000437">
    <property type="component" value="Chromosome 18"/>
</dbReference>
<dbReference type="Bgee" id="ENSDARG00000026395">
    <property type="expression patterns" value="Expressed in embryo and 8 other cell types or tissues"/>
</dbReference>
<dbReference type="GO" id="GO:0005634">
    <property type="term" value="C:nucleus"/>
    <property type="evidence" value="ECO:0007669"/>
    <property type="project" value="UniProtKB-SubCell"/>
</dbReference>
<dbReference type="GO" id="GO:0000981">
    <property type="term" value="F:DNA-binding transcription factor activity, RNA polymerase II-specific"/>
    <property type="evidence" value="ECO:0000318"/>
    <property type="project" value="GO_Central"/>
</dbReference>
<dbReference type="GO" id="GO:0000978">
    <property type="term" value="F:RNA polymerase II cis-regulatory region sequence-specific DNA binding"/>
    <property type="evidence" value="ECO:0000318"/>
    <property type="project" value="GO_Central"/>
</dbReference>
<dbReference type="GO" id="GO:0006357">
    <property type="term" value="P:regulation of transcription by RNA polymerase II"/>
    <property type="evidence" value="ECO:0000318"/>
    <property type="project" value="GO_Central"/>
</dbReference>
<dbReference type="GO" id="GO:0007418">
    <property type="term" value="P:ventral midline development"/>
    <property type="evidence" value="ECO:0000315"/>
    <property type="project" value="ZFIN"/>
</dbReference>
<dbReference type="FunFam" id="1.10.10.10:FF:000178">
    <property type="entry name" value="Putative Transcription factor RFX4"/>
    <property type="match status" value="1"/>
</dbReference>
<dbReference type="Gene3D" id="1.10.10.10">
    <property type="entry name" value="Winged helix-like DNA-binding domain superfamily/Winged helix DNA-binding domain"/>
    <property type="match status" value="1"/>
</dbReference>
<dbReference type="InterPro" id="IPR003150">
    <property type="entry name" value="DNA-bd_RFX"/>
</dbReference>
<dbReference type="InterPro" id="IPR039779">
    <property type="entry name" value="RFX-like"/>
</dbReference>
<dbReference type="InterPro" id="IPR036388">
    <property type="entry name" value="WH-like_DNA-bd_sf"/>
</dbReference>
<dbReference type="InterPro" id="IPR036390">
    <property type="entry name" value="WH_DNA-bd_sf"/>
</dbReference>
<dbReference type="PANTHER" id="PTHR12619">
    <property type="entry name" value="RFX TRANSCRIPTION FACTOR FAMILY"/>
    <property type="match status" value="1"/>
</dbReference>
<dbReference type="PANTHER" id="PTHR12619:SF5">
    <property type="entry name" value="TRANSCRIPTION FACTOR RFX4"/>
    <property type="match status" value="1"/>
</dbReference>
<dbReference type="Pfam" id="PF25340">
    <property type="entry name" value="BCD_RFX"/>
    <property type="match status" value="1"/>
</dbReference>
<dbReference type="Pfam" id="PF02257">
    <property type="entry name" value="RFX_DNA_binding"/>
    <property type="match status" value="1"/>
</dbReference>
<dbReference type="SUPFAM" id="SSF46785">
    <property type="entry name" value="Winged helix' DNA-binding domain"/>
    <property type="match status" value="1"/>
</dbReference>
<dbReference type="PROSITE" id="PS51526">
    <property type="entry name" value="RFX_DBD"/>
    <property type="match status" value="1"/>
</dbReference>
<evidence type="ECO:0000250" key="1"/>
<evidence type="ECO:0000255" key="2">
    <source>
        <dbReference type="PROSITE-ProRule" id="PRU00858"/>
    </source>
</evidence>
<evidence type="ECO:0000256" key="3">
    <source>
        <dbReference type="SAM" id="MobiDB-lite"/>
    </source>
</evidence>
<evidence type="ECO:0000305" key="4"/>